<evidence type="ECO:0000255" key="1">
    <source>
        <dbReference type="HAMAP-Rule" id="MF_00096"/>
    </source>
</evidence>
<evidence type="ECO:0000305" key="2"/>
<comment type="function">
    <text evidence="1">This protein is involved in the repair of mismatches in DNA. It is possible that it carries out the mismatch recognition step. This protein has a weak ATPase activity.</text>
</comment>
<comment type="similarity">
    <text evidence="1">Belongs to the DNA mismatch repair MutS family.</text>
</comment>
<comment type="sequence caution" evidence="2">
    <conflict type="erroneous initiation">
        <sequence resource="EMBL-CDS" id="AAK86162"/>
    </conflict>
</comment>
<reference key="1">
    <citation type="journal article" date="2001" name="Science">
        <title>The genome of the natural genetic engineer Agrobacterium tumefaciens C58.</title>
        <authorList>
            <person name="Wood D.W."/>
            <person name="Setubal J.C."/>
            <person name="Kaul R."/>
            <person name="Monks D.E."/>
            <person name="Kitajima J.P."/>
            <person name="Okura V.K."/>
            <person name="Zhou Y."/>
            <person name="Chen L."/>
            <person name="Wood G.E."/>
            <person name="Almeida N.F. Jr."/>
            <person name="Woo L."/>
            <person name="Chen Y."/>
            <person name="Paulsen I.T."/>
            <person name="Eisen J.A."/>
            <person name="Karp P.D."/>
            <person name="Bovee D. Sr."/>
            <person name="Chapman P."/>
            <person name="Clendenning J."/>
            <person name="Deatherage G."/>
            <person name="Gillet W."/>
            <person name="Grant C."/>
            <person name="Kutyavin T."/>
            <person name="Levy R."/>
            <person name="Li M.-J."/>
            <person name="McClelland E."/>
            <person name="Palmieri A."/>
            <person name="Raymond C."/>
            <person name="Rouse G."/>
            <person name="Saenphimmachak C."/>
            <person name="Wu Z."/>
            <person name="Romero P."/>
            <person name="Gordon D."/>
            <person name="Zhang S."/>
            <person name="Yoo H."/>
            <person name="Tao Y."/>
            <person name="Biddle P."/>
            <person name="Jung M."/>
            <person name="Krespan W."/>
            <person name="Perry M."/>
            <person name="Gordon-Kamm B."/>
            <person name="Liao L."/>
            <person name="Kim S."/>
            <person name="Hendrick C."/>
            <person name="Zhao Z.-Y."/>
            <person name="Dolan M."/>
            <person name="Chumley F."/>
            <person name="Tingey S.V."/>
            <person name="Tomb J.-F."/>
            <person name="Gordon M.P."/>
            <person name="Olson M.V."/>
            <person name="Nester E.W."/>
        </authorList>
    </citation>
    <scope>NUCLEOTIDE SEQUENCE [LARGE SCALE GENOMIC DNA]</scope>
    <source>
        <strain>C58 / ATCC 33970</strain>
    </source>
</reference>
<reference key="2">
    <citation type="journal article" date="2001" name="Science">
        <title>Genome sequence of the plant pathogen and biotechnology agent Agrobacterium tumefaciens C58.</title>
        <authorList>
            <person name="Goodner B."/>
            <person name="Hinkle G."/>
            <person name="Gattung S."/>
            <person name="Miller N."/>
            <person name="Blanchard M."/>
            <person name="Qurollo B."/>
            <person name="Goldman B.S."/>
            <person name="Cao Y."/>
            <person name="Askenazi M."/>
            <person name="Halling C."/>
            <person name="Mullin L."/>
            <person name="Houmiel K."/>
            <person name="Gordon J."/>
            <person name="Vaudin M."/>
            <person name="Iartchouk O."/>
            <person name="Epp A."/>
            <person name="Liu F."/>
            <person name="Wollam C."/>
            <person name="Allinger M."/>
            <person name="Doughty D."/>
            <person name="Scott C."/>
            <person name="Lappas C."/>
            <person name="Markelz B."/>
            <person name="Flanagan C."/>
            <person name="Crowell C."/>
            <person name="Gurson J."/>
            <person name="Lomo C."/>
            <person name="Sear C."/>
            <person name="Strub G."/>
            <person name="Cielo C."/>
            <person name="Slater S."/>
        </authorList>
    </citation>
    <scope>NUCLEOTIDE SEQUENCE [LARGE SCALE GENOMIC DNA]</scope>
    <source>
        <strain>C58 / ATCC 33970</strain>
    </source>
</reference>
<organism>
    <name type="scientific">Agrobacterium fabrum (strain C58 / ATCC 33970)</name>
    <name type="common">Agrobacterium tumefaciens (strain C58)</name>
    <dbReference type="NCBI Taxonomy" id="176299"/>
    <lineage>
        <taxon>Bacteria</taxon>
        <taxon>Pseudomonadati</taxon>
        <taxon>Pseudomonadota</taxon>
        <taxon>Alphaproteobacteria</taxon>
        <taxon>Hyphomicrobiales</taxon>
        <taxon>Rhizobiaceae</taxon>
        <taxon>Rhizobium/Agrobacterium group</taxon>
        <taxon>Agrobacterium</taxon>
        <taxon>Agrobacterium tumefaciens complex</taxon>
    </lineage>
</organism>
<keyword id="KW-0067">ATP-binding</keyword>
<keyword id="KW-0227">DNA damage</keyword>
<keyword id="KW-0234">DNA repair</keyword>
<keyword id="KW-0238">DNA-binding</keyword>
<keyword id="KW-0547">Nucleotide-binding</keyword>
<keyword id="KW-1185">Reference proteome</keyword>
<accession>Q8UIF2</accession>
<sequence length="904" mass="98204">MTDVLTTASLISEESRATATPMMEQYIEIKANNPGSLLFYRMGDFYELFFDDAVEASRALGITLTKRGQHMGHDIPMCGVPVHAADDYLQKLILRGYRVAVCEQIEDPAEAKKRGSKSVVKRDVVRLVTPGTLTEEKLLSPTESNYLMALARIRGSAEAQFALAWIDISTGVFRLAETTLTRLLADIWRIDPRELIVADSLFHDEELRPVFDVLGRVAVPQPAILFDSAVAEGRIARYFNVSTLDGFGTFSRVEMAAAAAAVAYVEKTQIAERPPLGAPERESAASTLFIDPATRANLELVKTLSGDRDGSLLHALNRTVTGGGARLLAERLMSPLTDPERINARLDAVAYLIDDVSLCDGLRDALKHVADMPRALSRLALERGGPRDLGAIRQGLVSAEKIAVILDGGLLPDELAKALRDLKALPGALEAMLGSMLADDLPLLKRDGGFLREGANPELDEVRALRDQSRRVIAGLQLQYADETGIKSLKIKHNNVLGYFIEVTAGNADVMMATDEAKARFIHRQTMAGAMRFTTTELADLESRIANAAAEALTMELEAFERMVEAVVQQAEAIKAGALALAVIDVASSLAYLATEQAYCRPIVDASMTFSIKGGRHPVVEQALRRQSAGPFIANNCDLSAVNGGKNGAIWLLTGPNMGGKSTFLRQNALIAILAQIGSFVPAEAAHIGVVDRLFSRVGASDDLARGRSTFMVEMVETAAILNQATDRSLVILDEIGRGTATFDGLSIAWAAVEHLHEVNRCRGLFATHFHELTVLSEKLGRLSNATMRVKEWEGDVIFLHEVGPGAADRSYGIQVARLAGLPASVVERAREVLTKLEDADRKNPASQLIDDLPLFQIAVRREETRKAGPSKVEEALKSFNPDEMTPREALDALYALKKELGKA</sequence>
<gene>
    <name evidence="1" type="primary">mutS</name>
    <name type="ordered locus">Atu0345</name>
    <name type="ORF">AGR_C_602</name>
</gene>
<dbReference type="EMBL" id="AE007869">
    <property type="protein sequence ID" value="AAK86162.2"/>
    <property type="status" value="ALT_INIT"/>
    <property type="molecule type" value="Genomic_DNA"/>
</dbReference>
<dbReference type="PIR" id="A97401">
    <property type="entry name" value="A97401"/>
</dbReference>
<dbReference type="PIR" id="AI2618">
    <property type="entry name" value="AI2618"/>
</dbReference>
<dbReference type="RefSeq" id="NP_353377.2">
    <property type="nucleotide sequence ID" value="NC_003062.2"/>
</dbReference>
<dbReference type="RefSeq" id="WP_006310190.1">
    <property type="nucleotide sequence ID" value="NC_003062.2"/>
</dbReference>
<dbReference type="SMR" id="Q8UIF2"/>
<dbReference type="STRING" id="176299.Atu0345"/>
<dbReference type="EnsemblBacteria" id="AAK86162">
    <property type="protein sequence ID" value="AAK86162"/>
    <property type="gene ID" value="Atu0345"/>
</dbReference>
<dbReference type="GeneID" id="1132383"/>
<dbReference type="KEGG" id="atu:Atu0345"/>
<dbReference type="PATRIC" id="fig|176299.10.peg.336"/>
<dbReference type="eggNOG" id="COG0249">
    <property type="taxonomic scope" value="Bacteria"/>
</dbReference>
<dbReference type="HOGENOM" id="CLU_002472_4_0_5"/>
<dbReference type="OrthoDB" id="9802448at2"/>
<dbReference type="Proteomes" id="UP000000813">
    <property type="component" value="Chromosome circular"/>
</dbReference>
<dbReference type="GO" id="GO:0005829">
    <property type="term" value="C:cytosol"/>
    <property type="evidence" value="ECO:0007669"/>
    <property type="project" value="TreeGrafter"/>
</dbReference>
<dbReference type="GO" id="GO:0005524">
    <property type="term" value="F:ATP binding"/>
    <property type="evidence" value="ECO:0007669"/>
    <property type="project" value="UniProtKB-UniRule"/>
</dbReference>
<dbReference type="GO" id="GO:0140664">
    <property type="term" value="F:ATP-dependent DNA damage sensor activity"/>
    <property type="evidence" value="ECO:0007669"/>
    <property type="project" value="InterPro"/>
</dbReference>
<dbReference type="GO" id="GO:0003684">
    <property type="term" value="F:damaged DNA binding"/>
    <property type="evidence" value="ECO:0007669"/>
    <property type="project" value="UniProtKB-UniRule"/>
</dbReference>
<dbReference type="GO" id="GO:0030983">
    <property type="term" value="F:mismatched DNA binding"/>
    <property type="evidence" value="ECO:0007669"/>
    <property type="project" value="InterPro"/>
</dbReference>
<dbReference type="GO" id="GO:0006298">
    <property type="term" value="P:mismatch repair"/>
    <property type="evidence" value="ECO:0007669"/>
    <property type="project" value="UniProtKB-UniRule"/>
</dbReference>
<dbReference type="CDD" id="cd03284">
    <property type="entry name" value="ABC_MutS1"/>
    <property type="match status" value="1"/>
</dbReference>
<dbReference type="FunFam" id="3.40.1170.10:FF:000001">
    <property type="entry name" value="DNA mismatch repair protein MutS"/>
    <property type="match status" value="1"/>
</dbReference>
<dbReference type="FunFam" id="3.40.50.300:FF:000870">
    <property type="entry name" value="MutS protein homolog 4"/>
    <property type="match status" value="1"/>
</dbReference>
<dbReference type="Gene3D" id="1.10.1420.10">
    <property type="match status" value="2"/>
</dbReference>
<dbReference type="Gene3D" id="6.10.140.430">
    <property type="match status" value="1"/>
</dbReference>
<dbReference type="Gene3D" id="3.40.1170.10">
    <property type="entry name" value="DNA repair protein MutS, domain I"/>
    <property type="match status" value="1"/>
</dbReference>
<dbReference type="Gene3D" id="3.30.420.110">
    <property type="entry name" value="MutS, connector domain"/>
    <property type="match status" value="1"/>
</dbReference>
<dbReference type="Gene3D" id="3.40.50.300">
    <property type="entry name" value="P-loop containing nucleotide triphosphate hydrolases"/>
    <property type="match status" value="1"/>
</dbReference>
<dbReference type="HAMAP" id="MF_00096">
    <property type="entry name" value="MutS"/>
    <property type="match status" value="1"/>
</dbReference>
<dbReference type="InterPro" id="IPR005748">
    <property type="entry name" value="DNA_mismatch_repair_MutS"/>
</dbReference>
<dbReference type="InterPro" id="IPR007695">
    <property type="entry name" value="DNA_mismatch_repair_MutS-lik_N"/>
</dbReference>
<dbReference type="InterPro" id="IPR017261">
    <property type="entry name" value="DNA_mismatch_repair_MutS/MSH"/>
</dbReference>
<dbReference type="InterPro" id="IPR000432">
    <property type="entry name" value="DNA_mismatch_repair_MutS_C"/>
</dbReference>
<dbReference type="InterPro" id="IPR007861">
    <property type="entry name" value="DNA_mismatch_repair_MutS_clamp"/>
</dbReference>
<dbReference type="InterPro" id="IPR007696">
    <property type="entry name" value="DNA_mismatch_repair_MutS_core"/>
</dbReference>
<dbReference type="InterPro" id="IPR016151">
    <property type="entry name" value="DNA_mismatch_repair_MutS_N"/>
</dbReference>
<dbReference type="InterPro" id="IPR036187">
    <property type="entry name" value="DNA_mismatch_repair_MutS_sf"/>
</dbReference>
<dbReference type="InterPro" id="IPR007860">
    <property type="entry name" value="DNA_mmatch_repair_MutS_con_dom"/>
</dbReference>
<dbReference type="InterPro" id="IPR045076">
    <property type="entry name" value="MutS"/>
</dbReference>
<dbReference type="InterPro" id="IPR036678">
    <property type="entry name" value="MutS_con_dom_sf"/>
</dbReference>
<dbReference type="InterPro" id="IPR027417">
    <property type="entry name" value="P-loop_NTPase"/>
</dbReference>
<dbReference type="NCBIfam" id="TIGR01070">
    <property type="entry name" value="mutS1"/>
    <property type="match status" value="1"/>
</dbReference>
<dbReference type="NCBIfam" id="NF003810">
    <property type="entry name" value="PRK05399.1"/>
    <property type="match status" value="1"/>
</dbReference>
<dbReference type="PANTHER" id="PTHR11361:SF34">
    <property type="entry name" value="DNA MISMATCH REPAIR PROTEIN MSH1, MITOCHONDRIAL"/>
    <property type="match status" value="1"/>
</dbReference>
<dbReference type="PANTHER" id="PTHR11361">
    <property type="entry name" value="DNA MISMATCH REPAIR PROTEIN MUTS FAMILY MEMBER"/>
    <property type="match status" value="1"/>
</dbReference>
<dbReference type="Pfam" id="PF01624">
    <property type="entry name" value="MutS_I"/>
    <property type="match status" value="1"/>
</dbReference>
<dbReference type="Pfam" id="PF05188">
    <property type="entry name" value="MutS_II"/>
    <property type="match status" value="1"/>
</dbReference>
<dbReference type="Pfam" id="PF05192">
    <property type="entry name" value="MutS_III"/>
    <property type="match status" value="1"/>
</dbReference>
<dbReference type="Pfam" id="PF05190">
    <property type="entry name" value="MutS_IV"/>
    <property type="match status" value="1"/>
</dbReference>
<dbReference type="Pfam" id="PF00488">
    <property type="entry name" value="MutS_V"/>
    <property type="match status" value="1"/>
</dbReference>
<dbReference type="PIRSF" id="PIRSF037677">
    <property type="entry name" value="DNA_mis_repair_Msh6"/>
    <property type="match status" value="1"/>
</dbReference>
<dbReference type="SMART" id="SM00534">
    <property type="entry name" value="MUTSac"/>
    <property type="match status" value="1"/>
</dbReference>
<dbReference type="SMART" id="SM00533">
    <property type="entry name" value="MUTSd"/>
    <property type="match status" value="1"/>
</dbReference>
<dbReference type="SUPFAM" id="SSF55271">
    <property type="entry name" value="DNA repair protein MutS, domain I"/>
    <property type="match status" value="1"/>
</dbReference>
<dbReference type="SUPFAM" id="SSF53150">
    <property type="entry name" value="DNA repair protein MutS, domain II"/>
    <property type="match status" value="1"/>
</dbReference>
<dbReference type="SUPFAM" id="SSF48334">
    <property type="entry name" value="DNA repair protein MutS, domain III"/>
    <property type="match status" value="1"/>
</dbReference>
<dbReference type="SUPFAM" id="SSF52540">
    <property type="entry name" value="P-loop containing nucleoside triphosphate hydrolases"/>
    <property type="match status" value="1"/>
</dbReference>
<dbReference type="PROSITE" id="PS00486">
    <property type="entry name" value="DNA_MISMATCH_REPAIR_2"/>
    <property type="match status" value="1"/>
</dbReference>
<proteinExistence type="inferred from homology"/>
<name>MUTS_AGRFC</name>
<protein>
    <recommendedName>
        <fullName evidence="1">DNA mismatch repair protein MutS</fullName>
    </recommendedName>
</protein>
<feature type="chain" id="PRO_0000115062" description="DNA mismatch repair protein MutS">
    <location>
        <begin position="1"/>
        <end position="904"/>
    </location>
</feature>
<feature type="binding site" evidence="1">
    <location>
        <begin position="655"/>
        <end position="662"/>
    </location>
    <ligand>
        <name>ATP</name>
        <dbReference type="ChEBI" id="CHEBI:30616"/>
    </ligand>
</feature>